<organism>
    <name type="scientific">Staphylococcus saprophyticus subsp. saprophyticus (strain ATCC 15305 / DSM 20229 / NCIMB 8711 / NCTC 7292 / S-41)</name>
    <dbReference type="NCBI Taxonomy" id="342451"/>
    <lineage>
        <taxon>Bacteria</taxon>
        <taxon>Bacillati</taxon>
        <taxon>Bacillota</taxon>
        <taxon>Bacilli</taxon>
        <taxon>Bacillales</taxon>
        <taxon>Staphylococcaceae</taxon>
        <taxon>Staphylococcus</taxon>
    </lineage>
</organism>
<evidence type="ECO:0000250" key="1"/>
<evidence type="ECO:0000305" key="2"/>
<protein>
    <recommendedName>
        <fullName>Putative TrmH family tRNA/rRNA methyltransferase</fullName>
        <ecNumber>2.1.1.-</ecNumber>
    </recommendedName>
</protein>
<feature type="chain" id="PRO_0000224834" description="Putative TrmH family tRNA/rRNA methyltransferase">
    <location>
        <begin position="1"/>
        <end position="249"/>
    </location>
</feature>
<feature type="binding site" evidence="1">
    <location>
        <position position="196"/>
    </location>
    <ligand>
        <name>S-adenosyl-L-methionine</name>
        <dbReference type="ChEBI" id="CHEBI:59789"/>
    </ligand>
</feature>
<feature type="binding site" evidence="1">
    <location>
        <position position="216"/>
    </location>
    <ligand>
        <name>S-adenosyl-L-methionine</name>
        <dbReference type="ChEBI" id="CHEBI:59789"/>
    </ligand>
</feature>
<feature type="binding site" evidence="1">
    <location>
        <position position="225"/>
    </location>
    <ligand>
        <name>S-adenosyl-L-methionine</name>
        <dbReference type="ChEBI" id="CHEBI:59789"/>
    </ligand>
</feature>
<gene>
    <name type="ordered locus">SSP2224</name>
</gene>
<dbReference type="EC" id="2.1.1.-"/>
<dbReference type="EMBL" id="AP008934">
    <property type="protein sequence ID" value="BAE19369.1"/>
    <property type="molecule type" value="Genomic_DNA"/>
</dbReference>
<dbReference type="SMR" id="Q49V41"/>
<dbReference type="GeneID" id="3615554"/>
<dbReference type="KEGG" id="ssp:SSP2224"/>
<dbReference type="PATRIC" id="fig|342451.11.peg.2215"/>
<dbReference type="eggNOG" id="COG0566">
    <property type="taxonomic scope" value="Bacteria"/>
</dbReference>
<dbReference type="HOGENOM" id="CLU_021322_0_1_9"/>
<dbReference type="OrthoDB" id="9794400at2"/>
<dbReference type="Proteomes" id="UP000006371">
    <property type="component" value="Chromosome"/>
</dbReference>
<dbReference type="GO" id="GO:0005829">
    <property type="term" value="C:cytosol"/>
    <property type="evidence" value="ECO:0007669"/>
    <property type="project" value="TreeGrafter"/>
</dbReference>
<dbReference type="GO" id="GO:0003723">
    <property type="term" value="F:RNA binding"/>
    <property type="evidence" value="ECO:0007669"/>
    <property type="project" value="InterPro"/>
</dbReference>
<dbReference type="GO" id="GO:0008173">
    <property type="term" value="F:RNA methyltransferase activity"/>
    <property type="evidence" value="ECO:0007669"/>
    <property type="project" value="InterPro"/>
</dbReference>
<dbReference type="GO" id="GO:0032259">
    <property type="term" value="P:methylation"/>
    <property type="evidence" value="ECO:0007669"/>
    <property type="project" value="UniProtKB-KW"/>
</dbReference>
<dbReference type="GO" id="GO:0006396">
    <property type="term" value="P:RNA processing"/>
    <property type="evidence" value="ECO:0007669"/>
    <property type="project" value="InterPro"/>
</dbReference>
<dbReference type="CDD" id="cd18103">
    <property type="entry name" value="SpoU-like_RlmB"/>
    <property type="match status" value="1"/>
</dbReference>
<dbReference type="FunFam" id="3.40.1280.10:FF:000008">
    <property type="entry name" value="Group 3 RNA methyltransferase TrmH"/>
    <property type="match status" value="1"/>
</dbReference>
<dbReference type="Gene3D" id="3.30.1330.30">
    <property type="match status" value="1"/>
</dbReference>
<dbReference type="Gene3D" id="3.40.1280.10">
    <property type="match status" value="1"/>
</dbReference>
<dbReference type="InterPro" id="IPR029028">
    <property type="entry name" value="Alpha/beta_knot_MTases"/>
</dbReference>
<dbReference type="InterPro" id="IPR029064">
    <property type="entry name" value="Ribosomal_eL30-like_sf"/>
</dbReference>
<dbReference type="InterPro" id="IPR004441">
    <property type="entry name" value="rRNA_MeTrfase_TrmH"/>
</dbReference>
<dbReference type="InterPro" id="IPR001537">
    <property type="entry name" value="SpoU_MeTrfase"/>
</dbReference>
<dbReference type="InterPro" id="IPR013123">
    <property type="entry name" value="SpoU_subst-bd"/>
</dbReference>
<dbReference type="InterPro" id="IPR029026">
    <property type="entry name" value="tRNA_m1G_MTases_N"/>
</dbReference>
<dbReference type="NCBIfam" id="TIGR00186">
    <property type="entry name" value="rRNA_methyl_3"/>
    <property type="match status" value="1"/>
</dbReference>
<dbReference type="PANTHER" id="PTHR46429">
    <property type="entry name" value="23S RRNA (GUANOSINE-2'-O-)-METHYLTRANSFERASE RLMB"/>
    <property type="match status" value="1"/>
</dbReference>
<dbReference type="PANTHER" id="PTHR46429:SF1">
    <property type="entry name" value="23S RRNA (GUANOSINE-2'-O-)-METHYLTRANSFERASE RLMB"/>
    <property type="match status" value="1"/>
</dbReference>
<dbReference type="Pfam" id="PF00588">
    <property type="entry name" value="SpoU_methylase"/>
    <property type="match status" value="1"/>
</dbReference>
<dbReference type="Pfam" id="PF08032">
    <property type="entry name" value="SpoU_sub_bind"/>
    <property type="match status" value="1"/>
</dbReference>
<dbReference type="SMART" id="SM00967">
    <property type="entry name" value="SpoU_sub_bind"/>
    <property type="match status" value="1"/>
</dbReference>
<dbReference type="SUPFAM" id="SSF75217">
    <property type="entry name" value="alpha/beta knot"/>
    <property type="match status" value="1"/>
</dbReference>
<dbReference type="SUPFAM" id="SSF55315">
    <property type="entry name" value="L30e-like"/>
    <property type="match status" value="1"/>
</dbReference>
<accession>Q49V41</accession>
<name>TRMHL_STAS1</name>
<comment type="similarity">
    <text evidence="2">Belongs to the class IV-like SAM-binding methyltransferase superfamily. RNA methyltransferase TrmH family.</text>
</comment>
<sequence length="249" mass="27064">MEEIVIVGRHAVKEAIVSGHTINKILIQDTIKKGQINEILKLANSNKIIVQSVPKSKIDGLSDSPHQGVAAYIAPYEYADFDAFVAQQKAQDKLSTVLILDGLEDPHNLGSILRTADASGVDGVIIPKRRSVALTQTVAKASTGAIQHIPVMRVTNLANTIETLKDNGYWIVGTEAENSTDYREMDAGMPLGIVIGSEGQGMSRLVKEKCDFYINIPMVGHVNSLNASVAASLMMYEVFRKRNYIGDKA</sequence>
<keyword id="KW-0489">Methyltransferase</keyword>
<keyword id="KW-1185">Reference proteome</keyword>
<keyword id="KW-0808">Transferase</keyword>
<proteinExistence type="inferred from homology"/>
<reference key="1">
    <citation type="journal article" date="2005" name="Proc. Natl. Acad. Sci. U.S.A.">
        <title>Whole genome sequence of Staphylococcus saprophyticus reveals the pathogenesis of uncomplicated urinary tract infection.</title>
        <authorList>
            <person name="Kuroda M."/>
            <person name="Yamashita A."/>
            <person name="Hirakawa H."/>
            <person name="Kumano M."/>
            <person name="Morikawa K."/>
            <person name="Higashide M."/>
            <person name="Maruyama A."/>
            <person name="Inose Y."/>
            <person name="Matoba K."/>
            <person name="Toh H."/>
            <person name="Kuhara S."/>
            <person name="Hattori M."/>
            <person name="Ohta T."/>
        </authorList>
    </citation>
    <scope>NUCLEOTIDE SEQUENCE [LARGE SCALE GENOMIC DNA]</scope>
    <source>
        <strain>ATCC 15305 / DSM 20229 / NCIMB 8711 / NCTC 7292 / S-41</strain>
    </source>
</reference>